<evidence type="ECO:0000255" key="1">
    <source>
        <dbReference type="HAMAP-Rule" id="MF_00254"/>
    </source>
</evidence>
<comment type="catalytic activity">
    <reaction evidence="1">
        <text>tRNA(Gly) + glycine + ATP = glycyl-tRNA(Gly) + AMP + diphosphate</text>
        <dbReference type="Rhea" id="RHEA:16013"/>
        <dbReference type="Rhea" id="RHEA-COMP:9664"/>
        <dbReference type="Rhea" id="RHEA-COMP:9683"/>
        <dbReference type="ChEBI" id="CHEBI:30616"/>
        <dbReference type="ChEBI" id="CHEBI:33019"/>
        <dbReference type="ChEBI" id="CHEBI:57305"/>
        <dbReference type="ChEBI" id="CHEBI:78442"/>
        <dbReference type="ChEBI" id="CHEBI:78522"/>
        <dbReference type="ChEBI" id="CHEBI:456215"/>
        <dbReference type="EC" id="6.1.1.14"/>
    </reaction>
</comment>
<comment type="subunit">
    <text evidence="1">Tetramer of two alpha and two beta subunits.</text>
</comment>
<comment type="subcellular location">
    <subcellularLocation>
        <location evidence="1">Cytoplasm</location>
    </subcellularLocation>
</comment>
<comment type="similarity">
    <text evidence="1">Belongs to the class-II aminoacyl-tRNA synthetase family.</text>
</comment>
<proteinExistence type="inferred from homology"/>
<name>SYGA_CHESB</name>
<gene>
    <name evidence="1" type="primary">glyQ</name>
    <name type="ordered locus">Meso_0713</name>
</gene>
<reference key="1">
    <citation type="submission" date="2006-06" db="EMBL/GenBank/DDBJ databases">
        <title>Complete sequence of chromosome of Mesorhizobium sp. BNC1.</title>
        <authorList>
            <consortium name="US DOE Joint Genome Institute"/>
            <person name="Copeland A."/>
            <person name="Lucas S."/>
            <person name="Lapidus A."/>
            <person name="Barry K."/>
            <person name="Detter J.C."/>
            <person name="Glavina del Rio T."/>
            <person name="Hammon N."/>
            <person name="Israni S."/>
            <person name="Dalin E."/>
            <person name="Tice H."/>
            <person name="Pitluck S."/>
            <person name="Chertkov O."/>
            <person name="Brettin T."/>
            <person name="Bruce D."/>
            <person name="Han C."/>
            <person name="Tapia R."/>
            <person name="Gilna P."/>
            <person name="Schmutz J."/>
            <person name="Larimer F."/>
            <person name="Land M."/>
            <person name="Hauser L."/>
            <person name="Kyrpides N."/>
            <person name="Mikhailova N."/>
            <person name="Richardson P."/>
        </authorList>
    </citation>
    <scope>NUCLEOTIDE SEQUENCE [LARGE SCALE GENOMIC DNA]</scope>
    <source>
        <strain>BNC1</strain>
    </source>
</reference>
<feature type="chain" id="PRO_1000047445" description="Glycine--tRNA ligase alpha subunit">
    <location>
        <begin position="1"/>
        <end position="318"/>
    </location>
</feature>
<keyword id="KW-0030">Aminoacyl-tRNA synthetase</keyword>
<keyword id="KW-0067">ATP-binding</keyword>
<keyword id="KW-0963">Cytoplasm</keyword>
<keyword id="KW-0436">Ligase</keyword>
<keyword id="KW-0547">Nucleotide-binding</keyword>
<keyword id="KW-0648">Protein biosynthesis</keyword>
<sequence>MNASALPHMHPSRSFQGLILTLHSYWAAQGCVILQPYDMEVGAGTFHPATTLRSLGPRPWNAAYVQPSRRPKDGRYGENPNRLQHYYQYQVILKPNPPNLQELYLGSLAAIGLDPLLHDIRFVEDDWESPTLGAWGLGWECWCDGMEVSQFTYFQQVCGIECAPVSGELTYGLERLAMYVQGVDNVYDLNFNGLEGSDKVTYGEVFLQAEQEYSRHNFEYANTEMLFRHFEDAERECRALLEAGAPRPSDNAALHRMVFPAYDQCIKASHVFNLLDARGVISVTERQSYILRVRDLAKACGEAFLNTEAGGATLATAA</sequence>
<protein>
    <recommendedName>
        <fullName evidence="1">Glycine--tRNA ligase alpha subunit</fullName>
        <ecNumber evidence="1">6.1.1.14</ecNumber>
    </recommendedName>
    <alternativeName>
        <fullName evidence="1">Glycyl-tRNA synthetase alpha subunit</fullName>
        <shortName evidence="1">GlyRS</shortName>
    </alternativeName>
</protein>
<dbReference type="EC" id="6.1.1.14" evidence="1"/>
<dbReference type="EMBL" id="CP000390">
    <property type="protein sequence ID" value="ABG62113.1"/>
    <property type="molecule type" value="Genomic_DNA"/>
</dbReference>
<dbReference type="SMR" id="Q11KG2"/>
<dbReference type="STRING" id="266779.Meso_0713"/>
<dbReference type="KEGG" id="mes:Meso_0713"/>
<dbReference type="eggNOG" id="COG0752">
    <property type="taxonomic scope" value="Bacteria"/>
</dbReference>
<dbReference type="HOGENOM" id="CLU_057066_1_0_5"/>
<dbReference type="GO" id="GO:0005829">
    <property type="term" value="C:cytosol"/>
    <property type="evidence" value="ECO:0007669"/>
    <property type="project" value="TreeGrafter"/>
</dbReference>
<dbReference type="GO" id="GO:0005524">
    <property type="term" value="F:ATP binding"/>
    <property type="evidence" value="ECO:0007669"/>
    <property type="project" value="UniProtKB-UniRule"/>
</dbReference>
<dbReference type="GO" id="GO:0004820">
    <property type="term" value="F:glycine-tRNA ligase activity"/>
    <property type="evidence" value="ECO:0007669"/>
    <property type="project" value="UniProtKB-UniRule"/>
</dbReference>
<dbReference type="GO" id="GO:0006426">
    <property type="term" value="P:glycyl-tRNA aminoacylation"/>
    <property type="evidence" value="ECO:0007669"/>
    <property type="project" value="UniProtKB-UniRule"/>
</dbReference>
<dbReference type="CDD" id="cd00733">
    <property type="entry name" value="GlyRS_alpha_core"/>
    <property type="match status" value="1"/>
</dbReference>
<dbReference type="FunFam" id="3.30.930.10:FF:000006">
    <property type="entry name" value="Glycine--tRNA ligase alpha subunit"/>
    <property type="match status" value="1"/>
</dbReference>
<dbReference type="Gene3D" id="3.30.930.10">
    <property type="entry name" value="Bira Bifunctional Protein, Domain 2"/>
    <property type="match status" value="1"/>
</dbReference>
<dbReference type="Gene3D" id="1.20.58.180">
    <property type="entry name" value="Class II aaRS and biotin synthetases, domain 2"/>
    <property type="match status" value="1"/>
</dbReference>
<dbReference type="HAMAP" id="MF_00254">
    <property type="entry name" value="Gly_tRNA_synth_alpha"/>
    <property type="match status" value="1"/>
</dbReference>
<dbReference type="InterPro" id="IPR045864">
    <property type="entry name" value="aa-tRNA-synth_II/BPL/LPL"/>
</dbReference>
<dbReference type="InterPro" id="IPR006194">
    <property type="entry name" value="Gly-tRNA-synth_heterodimer"/>
</dbReference>
<dbReference type="InterPro" id="IPR002310">
    <property type="entry name" value="Gly-tRNA_ligase_asu"/>
</dbReference>
<dbReference type="NCBIfam" id="TIGR00388">
    <property type="entry name" value="glyQ"/>
    <property type="match status" value="1"/>
</dbReference>
<dbReference type="NCBIfam" id="NF006827">
    <property type="entry name" value="PRK09348.1"/>
    <property type="match status" value="1"/>
</dbReference>
<dbReference type="PANTHER" id="PTHR30075:SF2">
    <property type="entry name" value="GLYCINE--TRNA LIGASE, CHLOROPLASTIC_MITOCHONDRIAL 2"/>
    <property type="match status" value="1"/>
</dbReference>
<dbReference type="PANTHER" id="PTHR30075">
    <property type="entry name" value="GLYCYL-TRNA SYNTHETASE"/>
    <property type="match status" value="1"/>
</dbReference>
<dbReference type="Pfam" id="PF02091">
    <property type="entry name" value="tRNA-synt_2e"/>
    <property type="match status" value="1"/>
</dbReference>
<dbReference type="PRINTS" id="PR01044">
    <property type="entry name" value="TRNASYNTHGA"/>
</dbReference>
<dbReference type="SUPFAM" id="SSF55681">
    <property type="entry name" value="Class II aaRS and biotin synthetases"/>
    <property type="match status" value="1"/>
</dbReference>
<dbReference type="PROSITE" id="PS50861">
    <property type="entry name" value="AA_TRNA_LIGASE_II_GLYAB"/>
    <property type="match status" value="1"/>
</dbReference>
<organism>
    <name type="scientific">Chelativorans sp. (strain BNC1)</name>
    <dbReference type="NCBI Taxonomy" id="266779"/>
    <lineage>
        <taxon>Bacteria</taxon>
        <taxon>Pseudomonadati</taxon>
        <taxon>Pseudomonadota</taxon>
        <taxon>Alphaproteobacteria</taxon>
        <taxon>Hyphomicrobiales</taxon>
        <taxon>Phyllobacteriaceae</taxon>
        <taxon>Chelativorans</taxon>
    </lineage>
</organism>
<accession>Q11KG2</accession>